<gene>
    <name evidence="1" type="primary">pstB2</name>
    <name type="ordered locus">YPTB3960</name>
</gene>
<comment type="function">
    <text evidence="1">Part of the ABC transporter complex PstSACB involved in phosphate import. Responsible for energy coupling to the transport system.</text>
</comment>
<comment type="catalytic activity">
    <reaction evidence="1">
        <text>phosphate(out) + ATP + H2O = ADP + 2 phosphate(in) + H(+)</text>
        <dbReference type="Rhea" id="RHEA:24440"/>
        <dbReference type="ChEBI" id="CHEBI:15377"/>
        <dbReference type="ChEBI" id="CHEBI:15378"/>
        <dbReference type="ChEBI" id="CHEBI:30616"/>
        <dbReference type="ChEBI" id="CHEBI:43474"/>
        <dbReference type="ChEBI" id="CHEBI:456216"/>
        <dbReference type="EC" id="7.3.2.1"/>
    </reaction>
</comment>
<comment type="subunit">
    <text evidence="1">The complex is composed of two ATP-binding proteins (PstB), two transmembrane proteins (PstC and PstA) and a solute-binding protein (PstS).</text>
</comment>
<comment type="subcellular location">
    <subcellularLocation>
        <location evidence="1">Cell inner membrane</location>
        <topology evidence="1">Peripheral membrane protein</topology>
    </subcellularLocation>
</comment>
<comment type="similarity">
    <text evidence="1">Belongs to the ABC transporter superfamily. Phosphate importer (TC 3.A.1.7) family.</text>
</comment>
<accession>Q663R5</accession>
<evidence type="ECO:0000255" key="1">
    <source>
        <dbReference type="HAMAP-Rule" id="MF_01702"/>
    </source>
</evidence>
<feature type="chain" id="PRO_0000092940" description="Phosphate import ATP-binding protein PstB 2">
    <location>
        <begin position="1"/>
        <end position="258"/>
    </location>
</feature>
<feature type="domain" description="ABC transporter" evidence="1">
    <location>
        <begin position="12"/>
        <end position="253"/>
    </location>
</feature>
<feature type="binding site" evidence="1">
    <location>
        <begin position="44"/>
        <end position="51"/>
    </location>
    <ligand>
        <name>ATP</name>
        <dbReference type="ChEBI" id="CHEBI:30616"/>
    </ligand>
</feature>
<protein>
    <recommendedName>
        <fullName evidence="1">Phosphate import ATP-binding protein PstB 2</fullName>
        <ecNumber evidence="1">7.3.2.1</ecNumber>
    </recommendedName>
    <alternativeName>
        <fullName evidence="1">ABC phosphate transporter 2</fullName>
    </alternativeName>
    <alternativeName>
        <fullName evidence="1">Phosphate-transporting ATPase 2</fullName>
    </alternativeName>
</protein>
<dbReference type="EC" id="7.3.2.1" evidence="1"/>
<dbReference type="EMBL" id="BX936398">
    <property type="protein sequence ID" value="CAH23198.1"/>
    <property type="molecule type" value="Genomic_DNA"/>
</dbReference>
<dbReference type="SMR" id="Q663R5"/>
<dbReference type="KEGG" id="ypo:BZ17_2616"/>
<dbReference type="KEGG" id="yps:YPTB3960"/>
<dbReference type="PATRIC" id="fig|273123.14.peg.2742"/>
<dbReference type="Proteomes" id="UP000001011">
    <property type="component" value="Chromosome"/>
</dbReference>
<dbReference type="GO" id="GO:0005886">
    <property type="term" value="C:plasma membrane"/>
    <property type="evidence" value="ECO:0007669"/>
    <property type="project" value="UniProtKB-SubCell"/>
</dbReference>
<dbReference type="GO" id="GO:0005524">
    <property type="term" value="F:ATP binding"/>
    <property type="evidence" value="ECO:0007669"/>
    <property type="project" value="UniProtKB-KW"/>
</dbReference>
<dbReference type="GO" id="GO:0016887">
    <property type="term" value="F:ATP hydrolysis activity"/>
    <property type="evidence" value="ECO:0007669"/>
    <property type="project" value="InterPro"/>
</dbReference>
<dbReference type="GO" id="GO:0015415">
    <property type="term" value="F:ATPase-coupled phosphate ion transmembrane transporter activity"/>
    <property type="evidence" value="ECO:0007669"/>
    <property type="project" value="UniProtKB-EC"/>
</dbReference>
<dbReference type="GO" id="GO:0035435">
    <property type="term" value="P:phosphate ion transmembrane transport"/>
    <property type="evidence" value="ECO:0007669"/>
    <property type="project" value="InterPro"/>
</dbReference>
<dbReference type="CDD" id="cd03260">
    <property type="entry name" value="ABC_PstB_phosphate_transporter"/>
    <property type="match status" value="1"/>
</dbReference>
<dbReference type="FunFam" id="3.40.50.300:FF:000132">
    <property type="entry name" value="Phosphate import ATP-binding protein PstB"/>
    <property type="match status" value="1"/>
</dbReference>
<dbReference type="Gene3D" id="3.40.50.300">
    <property type="entry name" value="P-loop containing nucleotide triphosphate hydrolases"/>
    <property type="match status" value="1"/>
</dbReference>
<dbReference type="InterPro" id="IPR003593">
    <property type="entry name" value="AAA+_ATPase"/>
</dbReference>
<dbReference type="InterPro" id="IPR003439">
    <property type="entry name" value="ABC_transporter-like_ATP-bd"/>
</dbReference>
<dbReference type="InterPro" id="IPR017871">
    <property type="entry name" value="ABC_transporter-like_CS"/>
</dbReference>
<dbReference type="InterPro" id="IPR027417">
    <property type="entry name" value="P-loop_NTPase"/>
</dbReference>
<dbReference type="InterPro" id="IPR005670">
    <property type="entry name" value="PstB-like"/>
</dbReference>
<dbReference type="NCBIfam" id="TIGR00972">
    <property type="entry name" value="3a0107s01c2"/>
    <property type="match status" value="1"/>
</dbReference>
<dbReference type="PANTHER" id="PTHR43423">
    <property type="entry name" value="ABC TRANSPORTER I FAMILY MEMBER 17"/>
    <property type="match status" value="1"/>
</dbReference>
<dbReference type="PANTHER" id="PTHR43423:SF3">
    <property type="entry name" value="PHOSPHATE IMPORT ATP-BINDING PROTEIN PSTB"/>
    <property type="match status" value="1"/>
</dbReference>
<dbReference type="Pfam" id="PF00005">
    <property type="entry name" value="ABC_tran"/>
    <property type="match status" value="1"/>
</dbReference>
<dbReference type="SMART" id="SM00382">
    <property type="entry name" value="AAA"/>
    <property type="match status" value="1"/>
</dbReference>
<dbReference type="SUPFAM" id="SSF52540">
    <property type="entry name" value="P-loop containing nucleoside triphosphate hydrolases"/>
    <property type="match status" value="1"/>
</dbReference>
<dbReference type="PROSITE" id="PS00211">
    <property type="entry name" value="ABC_TRANSPORTER_1"/>
    <property type="match status" value="1"/>
</dbReference>
<dbReference type="PROSITE" id="PS50893">
    <property type="entry name" value="ABC_TRANSPORTER_2"/>
    <property type="match status" value="1"/>
</dbReference>
<dbReference type="PROSITE" id="PS51238">
    <property type="entry name" value="PSTB"/>
    <property type="match status" value="1"/>
</dbReference>
<proteinExistence type="inferred from homology"/>
<name>PSTB2_YERPS</name>
<sequence>MSMATDVTNSKIQVRDLNFYYGKFHALKNISLDIAKNQVTAFIGPSGCGKSTLLRTFNKMYQLYPEQRAEGDILLDGQNILTDKQDIALLRAKVGMVFQKPTPFPMSIYDNIAFGVKLFESLSRADMDERVQWALTKAALWNETKDKLHQSGYSLSGGQQQRLCIARGIAIRPDVLLLDEPCSALDPISTGRIEELISELKSDYTVVIVTHNMQQAARCSDHTAFMYLGELIEFSDTDTLFTTPQQKQTEDYITGRYG</sequence>
<keyword id="KW-0067">ATP-binding</keyword>
<keyword id="KW-0997">Cell inner membrane</keyword>
<keyword id="KW-1003">Cell membrane</keyword>
<keyword id="KW-0472">Membrane</keyword>
<keyword id="KW-0547">Nucleotide-binding</keyword>
<keyword id="KW-0592">Phosphate transport</keyword>
<keyword id="KW-1278">Translocase</keyword>
<keyword id="KW-0813">Transport</keyword>
<reference key="1">
    <citation type="journal article" date="2004" name="Proc. Natl. Acad. Sci. U.S.A.">
        <title>Insights into the evolution of Yersinia pestis through whole-genome comparison with Yersinia pseudotuberculosis.</title>
        <authorList>
            <person name="Chain P.S.G."/>
            <person name="Carniel E."/>
            <person name="Larimer F.W."/>
            <person name="Lamerdin J."/>
            <person name="Stoutland P.O."/>
            <person name="Regala W.M."/>
            <person name="Georgescu A.M."/>
            <person name="Vergez L.M."/>
            <person name="Land M.L."/>
            <person name="Motin V.L."/>
            <person name="Brubaker R.R."/>
            <person name="Fowler J."/>
            <person name="Hinnebusch J."/>
            <person name="Marceau M."/>
            <person name="Medigue C."/>
            <person name="Simonet M."/>
            <person name="Chenal-Francisque V."/>
            <person name="Souza B."/>
            <person name="Dacheux D."/>
            <person name="Elliott J.M."/>
            <person name="Derbise A."/>
            <person name="Hauser L.J."/>
            <person name="Garcia E."/>
        </authorList>
    </citation>
    <scope>NUCLEOTIDE SEQUENCE [LARGE SCALE GENOMIC DNA]</scope>
    <source>
        <strain>IP32953</strain>
    </source>
</reference>
<organism>
    <name type="scientific">Yersinia pseudotuberculosis serotype I (strain IP32953)</name>
    <dbReference type="NCBI Taxonomy" id="273123"/>
    <lineage>
        <taxon>Bacteria</taxon>
        <taxon>Pseudomonadati</taxon>
        <taxon>Pseudomonadota</taxon>
        <taxon>Gammaproteobacteria</taxon>
        <taxon>Enterobacterales</taxon>
        <taxon>Yersiniaceae</taxon>
        <taxon>Yersinia</taxon>
    </lineage>
</organism>